<keyword id="KW-0071">Autoinducer synthesis</keyword>
<keyword id="KW-0408">Iron</keyword>
<keyword id="KW-0456">Lyase</keyword>
<keyword id="KW-0479">Metal-binding</keyword>
<keyword id="KW-0673">Quorum sensing</keyword>
<gene>
    <name evidence="1" type="primary">luxS</name>
    <name type="ordered locus">SG2725</name>
</gene>
<feature type="chain" id="PRO_1000093323" description="S-ribosylhomocysteine lyase">
    <location>
        <begin position="1"/>
        <end position="171"/>
    </location>
</feature>
<feature type="binding site" evidence="1">
    <location>
        <position position="54"/>
    </location>
    <ligand>
        <name>Fe cation</name>
        <dbReference type="ChEBI" id="CHEBI:24875"/>
    </ligand>
</feature>
<feature type="binding site" evidence="1">
    <location>
        <position position="58"/>
    </location>
    <ligand>
        <name>Fe cation</name>
        <dbReference type="ChEBI" id="CHEBI:24875"/>
    </ligand>
</feature>
<feature type="binding site" evidence="1">
    <location>
        <position position="128"/>
    </location>
    <ligand>
        <name>Fe cation</name>
        <dbReference type="ChEBI" id="CHEBI:24875"/>
    </ligand>
</feature>
<sequence>MPLLDSFAVDHTRMQAPAVRVAKTMNTPHGDAITVFDLRFCIPNKEVMPEKGIHTLEHLFAGFMRDHLNGNGVEIIDISPMGCRTGFYMSLIGTPDEQRVADAWKAAMADVLKVQDQNQIPELNVYQCGTYQMHSLSEAQDIARHILERDVRVNSNKELALPKEKLQELHI</sequence>
<dbReference type="EC" id="4.4.1.21" evidence="1"/>
<dbReference type="EMBL" id="AM933173">
    <property type="protein sequence ID" value="CAR38534.1"/>
    <property type="molecule type" value="Genomic_DNA"/>
</dbReference>
<dbReference type="RefSeq" id="WP_001130194.1">
    <property type="nucleotide sequence ID" value="NC_011274.1"/>
</dbReference>
<dbReference type="SMR" id="B5RDE7"/>
<dbReference type="KEGG" id="seg:SG2725"/>
<dbReference type="HOGENOM" id="CLU_107531_2_0_6"/>
<dbReference type="Proteomes" id="UP000008321">
    <property type="component" value="Chromosome"/>
</dbReference>
<dbReference type="GO" id="GO:0005506">
    <property type="term" value="F:iron ion binding"/>
    <property type="evidence" value="ECO:0007669"/>
    <property type="project" value="InterPro"/>
</dbReference>
<dbReference type="GO" id="GO:0043768">
    <property type="term" value="F:S-ribosylhomocysteine lyase activity"/>
    <property type="evidence" value="ECO:0007669"/>
    <property type="project" value="UniProtKB-UniRule"/>
</dbReference>
<dbReference type="GO" id="GO:0009372">
    <property type="term" value="P:quorum sensing"/>
    <property type="evidence" value="ECO:0007669"/>
    <property type="project" value="UniProtKB-UniRule"/>
</dbReference>
<dbReference type="FunFam" id="3.30.1360.80:FF:000001">
    <property type="entry name" value="S-ribosylhomocysteine lyase"/>
    <property type="match status" value="1"/>
</dbReference>
<dbReference type="Gene3D" id="3.30.1360.80">
    <property type="entry name" value="S-ribosylhomocysteinase (LuxS)"/>
    <property type="match status" value="1"/>
</dbReference>
<dbReference type="HAMAP" id="MF_00091">
    <property type="entry name" value="LuxS"/>
    <property type="match status" value="1"/>
</dbReference>
<dbReference type="InterPro" id="IPR037005">
    <property type="entry name" value="LuxS_sf"/>
</dbReference>
<dbReference type="InterPro" id="IPR011249">
    <property type="entry name" value="Metalloenz_LuxS/M16"/>
</dbReference>
<dbReference type="InterPro" id="IPR003815">
    <property type="entry name" value="S-ribosylhomocysteinase"/>
</dbReference>
<dbReference type="NCBIfam" id="NF002602">
    <property type="entry name" value="PRK02260.1-2"/>
    <property type="match status" value="1"/>
</dbReference>
<dbReference type="PANTHER" id="PTHR35799">
    <property type="entry name" value="S-RIBOSYLHOMOCYSTEINE LYASE"/>
    <property type="match status" value="1"/>
</dbReference>
<dbReference type="PANTHER" id="PTHR35799:SF1">
    <property type="entry name" value="S-RIBOSYLHOMOCYSTEINE LYASE"/>
    <property type="match status" value="1"/>
</dbReference>
<dbReference type="Pfam" id="PF02664">
    <property type="entry name" value="LuxS"/>
    <property type="match status" value="1"/>
</dbReference>
<dbReference type="PIRSF" id="PIRSF006160">
    <property type="entry name" value="AI2"/>
    <property type="match status" value="1"/>
</dbReference>
<dbReference type="PRINTS" id="PR01487">
    <property type="entry name" value="LUXSPROTEIN"/>
</dbReference>
<dbReference type="SUPFAM" id="SSF63411">
    <property type="entry name" value="LuxS/MPP-like metallohydrolase"/>
    <property type="match status" value="1"/>
</dbReference>
<accession>B5RDE7</accession>
<protein>
    <recommendedName>
        <fullName evidence="1">S-ribosylhomocysteine lyase</fullName>
        <ecNumber evidence="1">4.4.1.21</ecNumber>
    </recommendedName>
    <alternativeName>
        <fullName evidence="1">AI-2 synthesis protein</fullName>
    </alternativeName>
    <alternativeName>
        <fullName evidence="1">Autoinducer-2 production protein LuxS</fullName>
    </alternativeName>
</protein>
<reference key="1">
    <citation type="journal article" date="2008" name="Genome Res.">
        <title>Comparative genome analysis of Salmonella enteritidis PT4 and Salmonella gallinarum 287/91 provides insights into evolutionary and host adaptation pathways.</title>
        <authorList>
            <person name="Thomson N.R."/>
            <person name="Clayton D.J."/>
            <person name="Windhorst D."/>
            <person name="Vernikos G."/>
            <person name="Davidson S."/>
            <person name="Churcher C."/>
            <person name="Quail M.A."/>
            <person name="Stevens M."/>
            <person name="Jones M.A."/>
            <person name="Watson M."/>
            <person name="Barron A."/>
            <person name="Layton A."/>
            <person name="Pickard D."/>
            <person name="Kingsley R.A."/>
            <person name="Bignell A."/>
            <person name="Clark L."/>
            <person name="Harris B."/>
            <person name="Ormond D."/>
            <person name="Abdellah Z."/>
            <person name="Brooks K."/>
            <person name="Cherevach I."/>
            <person name="Chillingworth T."/>
            <person name="Woodward J."/>
            <person name="Norberczak H."/>
            <person name="Lord A."/>
            <person name="Arrowsmith C."/>
            <person name="Jagels K."/>
            <person name="Moule S."/>
            <person name="Mungall K."/>
            <person name="Saunders M."/>
            <person name="Whitehead S."/>
            <person name="Chabalgoity J.A."/>
            <person name="Maskell D."/>
            <person name="Humphreys T."/>
            <person name="Roberts M."/>
            <person name="Barrow P.A."/>
            <person name="Dougan G."/>
            <person name="Parkhill J."/>
        </authorList>
    </citation>
    <scope>NUCLEOTIDE SEQUENCE [LARGE SCALE GENOMIC DNA]</scope>
    <source>
        <strain>287/91 / NCTC 13346</strain>
    </source>
</reference>
<organism>
    <name type="scientific">Salmonella gallinarum (strain 287/91 / NCTC 13346)</name>
    <dbReference type="NCBI Taxonomy" id="550538"/>
    <lineage>
        <taxon>Bacteria</taxon>
        <taxon>Pseudomonadati</taxon>
        <taxon>Pseudomonadota</taxon>
        <taxon>Gammaproteobacteria</taxon>
        <taxon>Enterobacterales</taxon>
        <taxon>Enterobacteriaceae</taxon>
        <taxon>Salmonella</taxon>
    </lineage>
</organism>
<comment type="function">
    <text evidence="1">Involved in the synthesis of autoinducer 2 (AI-2) which is secreted by bacteria and is used to communicate both the cell density and the metabolic potential of the environment. The regulation of gene expression in response to changes in cell density is called quorum sensing. Catalyzes the transformation of S-ribosylhomocysteine (RHC) to homocysteine (HC) and 4,5-dihydroxy-2,3-pentadione (DPD).</text>
</comment>
<comment type="catalytic activity">
    <reaction evidence="1">
        <text>S-(5-deoxy-D-ribos-5-yl)-L-homocysteine = (S)-4,5-dihydroxypentane-2,3-dione + L-homocysteine</text>
        <dbReference type="Rhea" id="RHEA:17753"/>
        <dbReference type="ChEBI" id="CHEBI:29484"/>
        <dbReference type="ChEBI" id="CHEBI:58195"/>
        <dbReference type="ChEBI" id="CHEBI:58199"/>
        <dbReference type="EC" id="4.4.1.21"/>
    </reaction>
</comment>
<comment type="cofactor">
    <cofactor evidence="1">
        <name>Fe cation</name>
        <dbReference type="ChEBI" id="CHEBI:24875"/>
    </cofactor>
    <text evidence="1">Binds 1 Fe cation per subunit.</text>
</comment>
<comment type="subunit">
    <text evidence="1">Homodimer.</text>
</comment>
<comment type="similarity">
    <text evidence="1">Belongs to the LuxS family.</text>
</comment>
<proteinExistence type="inferred from homology"/>
<evidence type="ECO:0000255" key="1">
    <source>
        <dbReference type="HAMAP-Rule" id="MF_00091"/>
    </source>
</evidence>
<name>LUXS_SALG2</name>